<sequence>MNHDQSHALFSRAQQLLPGGVNSPVRAFKSVGGEPFFVERADGAYLYDVDGNRYIDYVGSWGPMIVGHNHPAVRQAVKKAIDNGLSFGAPCAGEVTMAETITRLVPSCEMVRMVNSGTEATLSAIRLARGATGRNRIVKFEGCYHGHGDSFLVKAGSGMLTLGVPTSPGVPAGLSELTLTLPYNDFEAATALFEQQGDDIAGLIIEPVVGNANCIPPREGYLQHLRALCTKHGALLIFDEVMTGFRVALGGAQAHYGITPDLTTFGKIIGGGMPVGAYGGRRELMQQIAPAGPIYQAGTLSGNPVAMAAGLAMLELVQQPGFHADLAERTARLCAGLEAAAADAGVAVTTTRVGAMFGLFFTSEKVETYAQATACDIPAFNRFFHAMLEQGVFLAPSAYEAGFLSSAHDDAVIEATLAAARVAFRAAKG</sequence>
<name>GSA_STRMK</name>
<organism>
    <name type="scientific">Stenotrophomonas maltophilia (strain K279a)</name>
    <dbReference type="NCBI Taxonomy" id="522373"/>
    <lineage>
        <taxon>Bacteria</taxon>
        <taxon>Pseudomonadati</taxon>
        <taxon>Pseudomonadota</taxon>
        <taxon>Gammaproteobacteria</taxon>
        <taxon>Lysobacterales</taxon>
        <taxon>Lysobacteraceae</taxon>
        <taxon>Stenotrophomonas</taxon>
        <taxon>Stenotrophomonas maltophilia group</taxon>
    </lineage>
</organism>
<comment type="catalytic activity">
    <reaction evidence="1">
        <text>(S)-4-amino-5-oxopentanoate = 5-aminolevulinate</text>
        <dbReference type="Rhea" id="RHEA:14265"/>
        <dbReference type="ChEBI" id="CHEBI:57501"/>
        <dbReference type="ChEBI" id="CHEBI:356416"/>
        <dbReference type="EC" id="5.4.3.8"/>
    </reaction>
</comment>
<comment type="cofactor">
    <cofactor evidence="1">
        <name>pyridoxal 5'-phosphate</name>
        <dbReference type="ChEBI" id="CHEBI:597326"/>
    </cofactor>
</comment>
<comment type="pathway">
    <text evidence="1">Porphyrin-containing compound metabolism; protoporphyrin-IX biosynthesis; 5-aminolevulinate from L-glutamyl-tRNA(Glu): step 2/2.</text>
</comment>
<comment type="subunit">
    <text evidence="1">Homodimer.</text>
</comment>
<comment type="subcellular location">
    <subcellularLocation>
        <location evidence="1">Cytoplasm</location>
    </subcellularLocation>
</comment>
<comment type="similarity">
    <text evidence="1">Belongs to the class-III pyridoxal-phosphate-dependent aminotransferase family. HemL subfamily.</text>
</comment>
<proteinExistence type="evidence at protein level"/>
<evidence type="ECO:0000255" key="1">
    <source>
        <dbReference type="HAMAP-Rule" id="MF_00375"/>
    </source>
</evidence>
<evidence type="ECO:0007829" key="2">
    <source>
        <dbReference type="PDB" id="6W80"/>
    </source>
</evidence>
<keyword id="KW-0002">3D-structure</keyword>
<keyword id="KW-0963">Cytoplasm</keyword>
<keyword id="KW-0413">Isomerase</keyword>
<keyword id="KW-0627">Porphyrin biosynthesis</keyword>
<keyword id="KW-0663">Pyridoxal phosphate</keyword>
<keyword id="KW-1185">Reference proteome</keyword>
<protein>
    <recommendedName>
        <fullName evidence="1">Glutamate-1-semialdehyde 2,1-aminomutase</fullName>
        <shortName evidence="1">GSA</shortName>
        <ecNumber evidence="1">5.4.3.8</ecNumber>
    </recommendedName>
    <alternativeName>
        <fullName evidence="1">Glutamate-1-semialdehyde aminotransferase</fullName>
        <shortName evidence="1">GSA-AT</shortName>
    </alternativeName>
</protein>
<feature type="chain" id="PRO_1000121926" description="Glutamate-1-semialdehyde 2,1-aminomutase">
    <location>
        <begin position="1"/>
        <end position="429"/>
    </location>
</feature>
<feature type="modified residue" description="N6-(pyridoxal phosphate)lysine" evidence="1">
    <location>
        <position position="267"/>
    </location>
</feature>
<feature type="helix" evidence="2">
    <location>
        <begin position="4"/>
        <end position="16"/>
    </location>
</feature>
<feature type="helix" evidence="2">
    <location>
        <begin position="18"/>
        <end position="20"/>
    </location>
</feature>
<feature type="strand" evidence="2">
    <location>
        <begin position="21"/>
        <end position="23"/>
    </location>
</feature>
<feature type="helix" evidence="2">
    <location>
        <begin position="24"/>
        <end position="27"/>
    </location>
</feature>
<feature type="turn" evidence="2">
    <location>
        <begin position="29"/>
        <end position="31"/>
    </location>
</feature>
<feature type="strand" evidence="2">
    <location>
        <begin position="38"/>
        <end position="43"/>
    </location>
</feature>
<feature type="strand" evidence="2">
    <location>
        <begin position="45"/>
        <end position="48"/>
    </location>
</feature>
<feature type="strand" evidence="2">
    <location>
        <begin position="53"/>
        <end position="58"/>
    </location>
</feature>
<feature type="helix" evidence="2">
    <location>
        <begin position="59"/>
        <end position="61"/>
    </location>
</feature>
<feature type="helix" evidence="2">
    <location>
        <begin position="71"/>
        <end position="81"/>
    </location>
</feature>
<feature type="helix" evidence="2">
    <location>
        <begin position="92"/>
        <end position="104"/>
    </location>
</feature>
<feature type="strand" evidence="2">
    <location>
        <begin position="109"/>
        <end position="116"/>
    </location>
</feature>
<feature type="helix" evidence="2">
    <location>
        <begin position="117"/>
        <end position="132"/>
    </location>
</feature>
<feature type="strand" evidence="2">
    <location>
        <begin position="136"/>
        <end position="141"/>
    </location>
</feature>
<feature type="helix" evidence="2">
    <location>
        <begin position="149"/>
        <end position="151"/>
    </location>
</feature>
<feature type="strand" evidence="2">
    <location>
        <begin position="152"/>
        <end position="154"/>
    </location>
</feature>
<feature type="strand" evidence="2">
    <location>
        <begin position="164"/>
        <end position="167"/>
    </location>
</feature>
<feature type="helix" evidence="2">
    <location>
        <begin position="172"/>
        <end position="176"/>
    </location>
</feature>
<feature type="strand" evidence="2">
    <location>
        <begin position="178"/>
        <end position="182"/>
    </location>
</feature>
<feature type="helix" evidence="2">
    <location>
        <begin position="186"/>
        <end position="196"/>
    </location>
</feature>
<feature type="helix" evidence="2">
    <location>
        <begin position="197"/>
        <end position="199"/>
    </location>
</feature>
<feature type="strand" evidence="2">
    <location>
        <begin position="200"/>
        <end position="205"/>
    </location>
</feature>
<feature type="strand" evidence="2">
    <location>
        <begin position="207"/>
        <end position="209"/>
    </location>
</feature>
<feature type="helix" evidence="2">
    <location>
        <begin position="221"/>
        <end position="232"/>
    </location>
</feature>
<feature type="strand" evidence="2">
    <location>
        <begin position="235"/>
        <end position="239"/>
    </location>
</feature>
<feature type="turn" evidence="2">
    <location>
        <begin position="241"/>
        <end position="246"/>
    </location>
</feature>
<feature type="helix" evidence="2">
    <location>
        <begin position="251"/>
        <end position="256"/>
    </location>
</feature>
<feature type="strand" evidence="2">
    <location>
        <begin position="261"/>
        <end position="265"/>
    </location>
</feature>
<feature type="helix" evidence="2">
    <location>
        <begin position="267"/>
        <end position="270"/>
    </location>
</feature>
<feature type="strand" evidence="2">
    <location>
        <begin position="276"/>
        <end position="280"/>
    </location>
</feature>
<feature type="helix" evidence="2">
    <location>
        <begin position="282"/>
        <end position="285"/>
    </location>
</feature>
<feature type="turn" evidence="2">
    <location>
        <begin position="289"/>
        <end position="291"/>
    </location>
</feature>
<feature type="strand" evidence="2">
    <location>
        <begin position="292"/>
        <end position="294"/>
    </location>
</feature>
<feature type="turn" evidence="2">
    <location>
        <begin position="299"/>
        <end position="302"/>
    </location>
</feature>
<feature type="helix" evidence="2">
    <location>
        <begin position="304"/>
        <end position="317"/>
    </location>
</feature>
<feature type="helix" evidence="2">
    <location>
        <begin position="322"/>
        <end position="344"/>
    </location>
</feature>
<feature type="strand" evidence="2">
    <location>
        <begin position="349"/>
        <end position="353"/>
    </location>
</feature>
<feature type="strand" evidence="2">
    <location>
        <begin position="356"/>
        <end position="364"/>
    </location>
</feature>
<feature type="helix" evidence="2">
    <location>
        <begin position="369"/>
        <end position="373"/>
    </location>
</feature>
<feature type="helix" evidence="2">
    <location>
        <begin position="377"/>
        <end position="389"/>
    </location>
</feature>
<feature type="helix" evidence="2">
    <location>
        <begin position="410"/>
        <end position="427"/>
    </location>
</feature>
<dbReference type="EC" id="5.4.3.8" evidence="1"/>
<dbReference type="EMBL" id="AM743169">
    <property type="protein sequence ID" value="CAQ47277.1"/>
    <property type="molecule type" value="Genomic_DNA"/>
</dbReference>
<dbReference type="RefSeq" id="WP_012481173.1">
    <property type="nucleotide sequence ID" value="NC_010943.1"/>
</dbReference>
<dbReference type="PDB" id="6W80">
    <property type="method" value="X-ray"/>
    <property type="resolution" value="1.40 A"/>
    <property type="chains" value="A=1-429"/>
</dbReference>
<dbReference type="PDBsum" id="6W80"/>
<dbReference type="SMR" id="B2FT35"/>
<dbReference type="EnsemblBacteria" id="CAQ47277">
    <property type="protein sequence ID" value="CAQ47277"/>
    <property type="gene ID" value="Smlt3873"/>
</dbReference>
<dbReference type="KEGG" id="sml:Smlt3873"/>
<dbReference type="PATRIC" id="fig|522373.3.peg.3648"/>
<dbReference type="eggNOG" id="COG0001">
    <property type="taxonomic scope" value="Bacteria"/>
</dbReference>
<dbReference type="HOGENOM" id="CLU_016922_1_5_6"/>
<dbReference type="UniPathway" id="UPA00251">
    <property type="reaction ID" value="UER00317"/>
</dbReference>
<dbReference type="Proteomes" id="UP000008840">
    <property type="component" value="Chromosome"/>
</dbReference>
<dbReference type="GO" id="GO:0005737">
    <property type="term" value="C:cytoplasm"/>
    <property type="evidence" value="ECO:0007669"/>
    <property type="project" value="UniProtKB-SubCell"/>
</dbReference>
<dbReference type="GO" id="GO:0042286">
    <property type="term" value="F:glutamate-1-semialdehyde 2,1-aminomutase activity"/>
    <property type="evidence" value="ECO:0007669"/>
    <property type="project" value="UniProtKB-UniRule"/>
</dbReference>
<dbReference type="GO" id="GO:0030170">
    <property type="term" value="F:pyridoxal phosphate binding"/>
    <property type="evidence" value="ECO:0007669"/>
    <property type="project" value="InterPro"/>
</dbReference>
<dbReference type="GO" id="GO:0008483">
    <property type="term" value="F:transaminase activity"/>
    <property type="evidence" value="ECO:0007669"/>
    <property type="project" value="InterPro"/>
</dbReference>
<dbReference type="GO" id="GO:0006782">
    <property type="term" value="P:protoporphyrinogen IX biosynthetic process"/>
    <property type="evidence" value="ECO:0007669"/>
    <property type="project" value="UniProtKB-UniRule"/>
</dbReference>
<dbReference type="CDD" id="cd00610">
    <property type="entry name" value="OAT_like"/>
    <property type="match status" value="1"/>
</dbReference>
<dbReference type="FunFam" id="3.40.640.10:FF:000021">
    <property type="entry name" value="Glutamate-1-semialdehyde 2,1-aminomutase"/>
    <property type="match status" value="1"/>
</dbReference>
<dbReference type="Gene3D" id="3.90.1150.10">
    <property type="entry name" value="Aspartate Aminotransferase, domain 1"/>
    <property type="match status" value="1"/>
</dbReference>
<dbReference type="Gene3D" id="3.40.640.10">
    <property type="entry name" value="Type I PLP-dependent aspartate aminotransferase-like (Major domain)"/>
    <property type="match status" value="1"/>
</dbReference>
<dbReference type="HAMAP" id="MF_00375">
    <property type="entry name" value="HemL_aminotrans_3"/>
    <property type="match status" value="1"/>
</dbReference>
<dbReference type="InterPro" id="IPR004639">
    <property type="entry name" value="4pyrrol_synth_GluAld_NH2Trfase"/>
</dbReference>
<dbReference type="InterPro" id="IPR005814">
    <property type="entry name" value="Aminotrans_3"/>
</dbReference>
<dbReference type="InterPro" id="IPR049704">
    <property type="entry name" value="Aminotrans_3_PPA_site"/>
</dbReference>
<dbReference type="InterPro" id="IPR015424">
    <property type="entry name" value="PyrdxlP-dep_Trfase"/>
</dbReference>
<dbReference type="InterPro" id="IPR015421">
    <property type="entry name" value="PyrdxlP-dep_Trfase_major"/>
</dbReference>
<dbReference type="InterPro" id="IPR015422">
    <property type="entry name" value="PyrdxlP-dep_Trfase_small"/>
</dbReference>
<dbReference type="NCBIfam" id="TIGR00713">
    <property type="entry name" value="hemL"/>
    <property type="match status" value="1"/>
</dbReference>
<dbReference type="NCBIfam" id="NF000818">
    <property type="entry name" value="PRK00062.1"/>
    <property type="match status" value="1"/>
</dbReference>
<dbReference type="PANTHER" id="PTHR43713">
    <property type="entry name" value="GLUTAMATE-1-SEMIALDEHYDE 2,1-AMINOMUTASE"/>
    <property type="match status" value="1"/>
</dbReference>
<dbReference type="PANTHER" id="PTHR43713:SF3">
    <property type="entry name" value="GLUTAMATE-1-SEMIALDEHYDE 2,1-AMINOMUTASE 1, CHLOROPLASTIC-RELATED"/>
    <property type="match status" value="1"/>
</dbReference>
<dbReference type="Pfam" id="PF00202">
    <property type="entry name" value="Aminotran_3"/>
    <property type="match status" value="1"/>
</dbReference>
<dbReference type="SUPFAM" id="SSF53383">
    <property type="entry name" value="PLP-dependent transferases"/>
    <property type="match status" value="1"/>
</dbReference>
<dbReference type="PROSITE" id="PS00600">
    <property type="entry name" value="AA_TRANSFER_CLASS_3"/>
    <property type="match status" value="1"/>
</dbReference>
<reference key="1">
    <citation type="journal article" date="2008" name="Genome Biol.">
        <title>The complete genome, comparative and functional analysis of Stenotrophomonas maltophilia reveals an organism heavily shielded by drug resistance determinants.</title>
        <authorList>
            <person name="Crossman L.C."/>
            <person name="Gould V.C."/>
            <person name="Dow J.M."/>
            <person name="Vernikos G.S."/>
            <person name="Okazaki A."/>
            <person name="Sebaihia M."/>
            <person name="Saunders D."/>
            <person name="Arrowsmith C."/>
            <person name="Carver T."/>
            <person name="Peters N."/>
            <person name="Adlem E."/>
            <person name="Kerhornou A."/>
            <person name="Lord A."/>
            <person name="Murphy L."/>
            <person name="Seeger K."/>
            <person name="Squares R."/>
            <person name="Rutter S."/>
            <person name="Quail M.A."/>
            <person name="Rajandream M.A."/>
            <person name="Harris D."/>
            <person name="Churcher C."/>
            <person name="Bentley S.D."/>
            <person name="Parkhill J."/>
            <person name="Thomson N.R."/>
            <person name="Avison M.B."/>
        </authorList>
    </citation>
    <scope>NUCLEOTIDE SEQUENCE [LARGE SCALE GENOMIC DNA]</scope>
    <source>
        <strain>K279a</strain>
    </source>
</reference>
<accession>B2FT35</accession>
<gene>
    <name evidence="1" type="primary">hemL</name>
    <name type="ordered locus">Smlt3873</name>
</gene>